<reference key="1">
    <citation type="journal article" date="2009" name="J. Bacteriol.">
        <title>Genome sequence of the probiotic bacterium Bifidobacterium animalis subsp. lactis AD011.</title>
        <authorList>
            <person name="Kim J.F."/>
            <person name="Jeong H."/>
            <person name="Yu D.S."/>
            <person name="Choi S.-H."/>
            <person name="Hur C.-G."/>
            <person name="Park M.-S."/>
            <person name="Yoon S.H."/>
            <person name="Kim D.-W."/>
            <person name="Ji G.E."/>
            <person name="Park H.-S."/>
            <person name="Oh T.K."/>
        </authorList>
    </citation>
    <scope>NUCLEOTIDE SEQUENCE [LARGE SCALE GENOMIC DNA]</scope>
    <source>
        <strain>AD011</strain>
    </source>
</reference>
<keyword id="KW-0227">DNA damage</keyword>
<keyword id="KW-0234">DNA repair</keyword>
<keyword id="KW-0235">DNA replication</keyword>
<keyword id="KW-0436">Ligase</keyword>
<keyword id="KW-0460">Magnesium</keyword>
<keyword id="KW-0464">Manganese</keyword>
<keyword id="KW-0479">Metal-binding</keyword>
<keyword id="KW-0520">NAD</keyword>
<keyword id="KW-1185">Reference proteome</keyword>
<keyword id="KW-0862">Zinc</keyword>
<comment type="function">
    <text evidence="1">DNA ligase that catalyzes the formation of phosphodiester linkages between 5'-phosphoryl and 3'-hydroxyl groups in double-stranded DNA using NAD as a coenzyme and as the energy source for the reaction. It is essential for DNA replication and repair of damaged DNA.</text>
</comment>
<comment type="catalytic activity">
    <reaction evidence="1">
        <text>NAD(+) + (deoxyribonucleotide)n-3'-hydroxyl + 5'-phospho-(deoxyribonucleotide)m = (deoxyribonucleotide)n+m + AMP + beta-nicotinamide D-nucleotide.</text>
        <dbReference type="EC" id="6.5.1.2"/>
    </reaction>
</comment>
<comment type="cofactor">
    <cofactor evidence="1">
        <name>Mg(2+)</name>
        <dbReference type="ChEBI" id="CHEBI:18420"/>
    </cofactor>
    <cofactor evidence="1">
        <name>Mn(2+)</name>
        <dbReference type="ChEBI" id="CHEBI:29035"/>
    </cofactor>
</comment>
<comment type="similarity">
    <text evidence="1">Belongs to the NAD-dependent DNA ligase family. LigA subfamily.</text>
</comment>
<dbReference type="EC" id="6.5.1.2" evidence="1"/>
<dbReference type="EMBL" id="CP001213">
    <property type="protein sequence ID" value="ACL29511.1"/>
    <property type="molecule type" value="Genomic_DNA"/>
</dbReference>
<dbReference type="RefSeq" id="WP_004218116.1">
    <property type="nucleotide sequence ID" value="NC_011835.1"/>
</dbReference>
<dbReference type="SMR" id="B8DU32"/>
<dbReference type="STRING" id="442563.BLA_1223"/>
<dbReference type="GeneID" id="29695664"/>
<dbReference type="KEGG" id="bla:BLA_1223"/>
<dbReference type="PATRIC" id="fig|442563.4.peg.1285"/>
<dbReference type="HOGENOM" id="CLU_007764_2_1_11"/>
<dbReference type="Proteomes" id="UP000002456">
    <property type="component" value="Chromosome"/>
</dbReference>
<dbReference type="GO" id="GO:0005829">
    <property type="term" value="C:cytosol"/>
    <property type="evidence" value="ECO:0007669"/>
    <property type="project" value="TreeGrafter"/>
</dbReference>
<dbReference type="GO" id="GO:0003911">
    <property type="term" value="F:DNA ligase (NAD+) activity"/>
    <property type="evidence" value="ECO:0007669"/>
    <property type="project" value="UniProtKB-UniRule"/>
</dbReference>
<dbReference type="GO" id="GO:0046872">
    <property type="term" value="F:metal ion binding"/>
    <property type="evidence" value="ECO:0007669"/>
    <property type="project" value="UniProtKB-KW"/>
</dbReference>
<dbReference type="GO" id="GO:0006281">
    <property type="term" value="P:DNA repair"/>
    <property type="evidence" value="ECO:0007669"/>
    <property type="project" value="UniProtKB-KW"/>
</dbReference>
<dbReference type="GO" id="GO:0006260">
    <property type="term" value="P:DNA replication"/>
    <property type="evidence" value="ECO:0007669"/>
    <property type="project" value="UniProtKB-KW"/>
</dbReference>
<dbReference type="CDD" id="cd17748">
    <property type="entry name" value="BRCT_DNA_ligase_like"/>
    <property type="match status" value="1"/>
</dbReference>
<dbReference type="CDD" id="cd00114">
    <property type="entry name" value="LIGANc"/>
    <property type="match status" value="1"/>
</dbReference>
<dbReference type="FunFam" id="1.10.150.20:FF:000006">
    <property type="entry name" value="DNA ligase"/>
    <property type="match status" value="1"/>
</dbReference>
<dbReference type="FunFam" id="2.40.50.140:FF:000012">
    <property type="entry name" value="DNA ligase"/>
    <property type="match status" value="1"/>
</dbReference>
<dbReference type="FunFam" id="3.30.470.30:FF:000001">
    <property type="entry name" value="DNA ligase"/>
    <property type="match status" value="1"/>
</dbReference>
<dbReference type="FunFam" id="3.40.50.10190:FF:000054">
    <property type="entry name" value="DNA ligase"/>
    <property type="match status" value="1"/>
</dbReference>
<dbReference type="Gene3D" id="6.20.10.30">
    <property type="match status" value="1"/>
</dbReference>
<dbReference type="Gene3D" id="1.10.150.20">
    <property type="entry name" value="5' to 3' exonuclease, C-terminal subdomain"/>
    <property type="match status" value="2"/>
</dbReference>
<dbReference type="Gene3D" id="3.40.50.10190">
    <property type="entry name" value="BRCT domain"/>
    <property type="match status" value="1"/>
</dbReference>
<dbReference type="Gene3D" id="3.30.470.30">
    <property type="entry name" value="DNA ligase/mRNA capping enzyme"/>
    <property type="match status" value="1"/>
</dbReference>
<dbReference type="Gene3D" id="1.10.287.610">
    <property type="entry name" value="Helix hairpin bin"/>
    <property type="match status" value="1"/>
</dbReference>
<dbReference type="Gene3D" id="2.40.50.140">
    <property type="entry name" value="Nucleic acid-binding proteins"/>
    <property type="match status" value="1"/>
</dbReference>
<dbReference type="HAMAP" id="MF_01588">
    <property type="entry name" value="DNA_ligase_A"/>
    <property type="match status" value="1"/>
</dbReference>
<dbReference type="InterPro" id="IPR001357">
    <property type="entry name" value="BRCT_dom"/>
</dbReference>
<dbReference type="InterPro" id="IPR036420">
    <property type="entry name" value="BRCT_dom_sf"/>
</dbReference>
<dbReference type="InterPro" id="IPR041663">
    <property type="entry name" value="DisA/LigA_HHH"/>
</dbReference>
<dbReference type="InterPro" id="IPR001679">
    <property type="entry name" value="DNA_ligase"/>
</dbReference>
<dbReference type="InterPro" id="IPR018239">
    <property type="entry name" value="DNA_ligase_AS"/>
</dbReference>
<dbReference type="InterPro" id="IPR033136">
    <property type="entry name" value="DNA_ligase_CS"/>
</dbReference>
<dbReference type="InterPro" id="IPR013839">
    <property type="entry name" value="DNAligase_adenylation"/>
</dbReference>
<dbReference type="InterPro" id="IPR013840">
    <property type="entry name" value="DNAligase_N"/>
</dbReference>
<dbReference type="InterPro" id="IPR012340">
    <property type="entry name" value="NA-bd_OB-fold"/>
</dbReference>
<dbReference type="InterPro" id="IPR004150">
    <property type="entry name" value="NAD_DNA_ligase_OB"/>
</dbReference>
<dbReference type="InterPro" id="IPR010994">
    <property type="entry name" value="RuvA_2-like"/>
</dbReference>
<dbReference type="InterPro" id="IPR004149">
    <property type="entry name" value="Znf_DNAligase_C4"/>
</dbReference>
<dbReference type="NCBIfam" id="TIGR00575">
    <property type="entry name" value="dnlj"/>
    <property type="match status" value="1"/>
</dbReference>
<dbReference type="NCBIfam" id="NF005932">
    <property type="entry name" value="PRK07956.1"/>
    <property type="match status" value="1"/>
</dbReference>
<dbReference type="PANTHER" id="PTHR23389">
    <property type="entry name" value="CHROMOSOME TRANSMISSION FIDELITY FACTOR 18"/>
    <property type="match status" value="1"/>
</dbReference>
<dbReference type="PANTHER" id="PTHR23389:SF9">
    <property type="entry name" value="DNA LIGASE"/>
    <property type="match status" value="1"/>
</dbReference>
<dbReference type="Pfam" id="PF00533">
    <property type="entry name" value="BRCT"/>
    <property type="match status" value="1"/>
</dbReference>
<dbReference type="Pfam" id="PF01653">
    <property type="entry name" value="DNA_ligase_aden"/>
    <property type="match status" value="1"/>
</dbReference>
<dbReference type="Pfam" id="PF03120">
    <property type="entry name" value="DNA_ligase_OB"/>
    <property type="match status" value="1"/>
</dbReference>
<dbReference type="Pfam" id="PF03119">
    <property type="entry name" value="DNA_ligase_ZBD"/>
    <property type="match status" value="1"/>
</dbReference>
<dbReference type="Pfam" id="PF12826">
    <property type="entry name" value="HHH_2"/>
    <property type="match status" value="1"/>
</dbReference>
<dbReference type="SMART" id="SM00292">
    <property type="entry name" value="BRCT"/>
    <property type="match status" value="1"/>
</dbReference>
<dbReference type="SMART" id="SM00532">
    <property type="entry name" value="LIGANc"/>
    <property type="match status" value="1"/>
</dbReference>
<dbReference type="SUPFAM" id="SSF52113">
    <property type="entry name" value="BRCT domain"/>
    <property type="match status" value="1"/>
</dbReference>
<dbReference type="SUPFAM" id="SSF56091">
    <property type="entry name" value="DNA ligase/mRNA capping enzyme, catalytic domain"/>
    <property type="match status" value="1"/>
</dbReference>
<dbReference type="SUPFAM" id="SSF50249">
    <property type="entry name" value="Nucleic acid-binding proteins"/>
    <property type="match status" value="1"/>
</dbReference>
<dbReference type="SUPFAM" id="SSF47781">
    <property type="entry name" value="RuvA domain 2-like"/>
    <property type="match status" value="2"/>
</dbReference>
<dbReference type="PROSITE" id="PS50172">
    <property type="entry name" value="BRCT"/>
    <property type="match status" value="1"/>
</dbReference>
<dbReference type="PROSITE" id="PS01055">
    <property type="entry name" value="DNA_LIGASE_N1"/>
    <property type="match status" value="1"/>
</dbReference>
<dbReference type="PROSITE" id="PS01056">
    <property type="entry name" value="DNA_LIGASE_N2"/>
    <property type="match status" value="1"/>
</dbReference>
<evidence type="ECO:0000255" key="1">
    <source>
        <dbReference type="HAMAP-Rule" id="MF_01588"/>
    </source>
</evidence>
<evidence type="ECO:0000256" key="2">
    <source>
        <dbReference type="SAM" id="MobiDB-lite"/>
    </source>
</evidence>
<feature type="chain" id="PRO_0000380307" description="DNA ligase">
    <location>
        <begin position="1"/>
        <end position="863"/>
    </location>
</feature>
<feature type="domain" description="BRCT" evidence="1">
    <location>
        <begin position="781"/>
        <end position="863"/>
    </location>
</feature>
<feature type="region of interest" description="Disordered" evidence="2">
    <location>
        <begin position="237"/>
        <end position="256"/>
    </location>
</feature>
<feature type="compositionally biased region" description="Low complexity" evidence="2">
    <location>
        <begin position="241"/>
        <end position="253"/>
    </location>
</feature>
<feature type="active site" description="N6-AMP-lysine intermediate" evidence="1">
    <location>
        <position position="161"/>
    </location>
</feature>
<feature type="binding site" evidence="1">
    <location>
        <begin position="76"/>
        <end position="80"/>
    </location>
    <ligand>
        <name>NAD(+)</name>
        <dbReference type="ChEBI" id="CHEBI:57540"/>
    </ligand>
</feature>
<feature type="binding site" evidence="1">
    <location>
        <begin position="125"/>
        <end position="126"/>
    </location>
    <ligand>
        <name>NAD(+)</name>
        <dbReference type="ChEBI" id="CHEBI:57540"/>
    </ligand>
</feature>
<feature type="binding site" evidence="1">
    <location>
        <position position="159"/>
    </location>
    <ligand>
        <name>NAD(+)</name>
        <dbReference type="ChEBI" id="CHEBI:57540"/>
    </ligand>
</feature>
<feature type="binding site" evidence="1">
    <location>
        <position position="182"/>
    </location>
    <ligand>
        <name>NAD(+)</name>
        <dbReference type="ChEBI" id="CHEBI:57540"/>
    </ligand>
</feature>
<feature type="binding site" evidence="1">
    <location>
        <position position="221"/>
    </location>
    <ligand>
        <name>NAD(+)</name>
        <dbReference type="ChEBI" id="CHEBI:57540"/>
    </ligand>
</feature>
<feature type="binding site" evidence="1">
    <location>
        <position position="346"/>
    </location>
    <ligand>
        <name>NAD(+)</name>
        <dbReference type="ChEBI" id="CHEBI:57540"/>
    </ligand>
</feature>
<feature type="binding site" evidence="1">
    <location>
        <position position="370"/>
    </location>
    <ligand>
        <name>NAD(+)</name>
        <dbReference type="ChEBI" id="CHEBI:57540"/>
    </ligand>
</feature>
<feature type="binding site" evidence="1">
    <location>
        <position position="467"/>
    </location>
    <ligand>
        <name>Zn(2+)</name>
        <dbReference type="ChEBI" id="CHEBI:29105"/>
    </ligand>
</feature>
<feature type="binding site" evidence="1">
    <location>
        <position position="470"/>
    </location>
    <ligand>
        <name>Zn(2+)</name>
        <dbReference type="ChEBI" id="CHEBI:29105"/>
    </ligand>
</feature>
<feature type="binding site" evidence="1">
    <location>
        <position position="486"/>
    </location>
    <ligand>
        <name>Zn(2+)</name>
        <dbReference type="ChEBI" id="CHEBI:29105"/>
    </ligand>
</feature>
<feature type="binding site" evidence="1">
    <location>
        <position position="492"/>
    </location>
    <ligand>
        <name>Zn(2+)</name>
        <dbReference type="ChEBI" id="CHEBI:29105"/>
    </ligand>
</feature>
<sequence length="863" mass="95953">MEDALIADEQLDRYPIGSDPWIDSLRDIDSDAMELDDLDVSKLNVEQAVRLWSRLSAWVEGDQVAYYVKDAPLSSDAAYDARMNCLKRLESEFPQLDTPQSPTHRVGGTFSNDFTAVRHPSQMMSLDDVFSFEELRAWYDGVRKDLEWPEDKLLPMTCEVKIDGLALNLIYRNGVLTQGLTRGDGVTGEDITMNVRTIHSIPTNLDGPEGDIPDMVEIRGEVFMRWDDFHKLNEANEDAGRPPFANPRNAAAGSLRQKDPRITAQRHLSFYAHGIGELVWGSGKPVDVADEVRNQSDAYTMYRKWGVPISPHNREVTDFDQILDMIEYYGEHRGDIEHALDGIVVKVDDLALQRRLGSTSRAPRWAIAYKYPPEEVNTKLLNIVVQVGRTGRVTPVAILNPVYVAGSTVSRTTLHNAYEVKRKGILIGDTVVVRKAGDVIPELVGPVIAKREGHEQDLREFVMPTRCPSCDTVLRYEKEGDKDLRCPNSESCPAQLAERVINLAARKAFDIEHLGDQSAVALTNPEDNRPDSVEAYAPGVREIVVEPGEEPAPYLAPSGLELPPIQEPVLTSEANLFDLEASDLRDVYVWREAQIIEVRRHVDSHGKERKVRHRLGGSGLWHREPAFWSGVKDAPLKKDANRKTVKDSEGNPEYEVKPDAVIVGHGRNGRPRIEEPTENTRKMLDEIEKAKHTDLSRVLVALSIRHVGPPTAFTLAKHFKTLDALADASAEELEQIDGIGAEIADSIATFFEEARMPGNWRGRVLEAWKAAGVGMSTHDEGLPQTLEGKSVVVTGTLEHFSRESAKEAIERRGGKASGSVSRKTDWVVVGANPGSKATKAEELGIPIIDEQQFDTLLATGDVQ</sequence>
<name>DNLJ_BIFA0</name>
<proteinExistence type="inferred from homology"/>
<protein>
    <recommendedName>
        <fullName evidence="1">DNA ligase</fullName>
        <ecNumber evidence="1">6.5.1.2</ecNumber>
    </recommendedName>
    <alternativeName>
        <fullName evidence="1">Polydeoxyribonucleotide synthase [NAD(+)]</fullName>
    </alternativeName>
</protein>
<accession>B8DU32</accession>
<organism>
    <name type="scientific">Bifidobacterium animalis subsp. lactis (strain AD011)</name>
    <dbReference type="NCBI Taxonomy" id="442563"/>
    <lineage>
        <taxon>Bacteria</taxon>
        <taxon>Bacillati</taxon>
        <taxon>Actinomycetota</taxon>
        <taxon>Actinomycetes</taxon>
        <taxon>Bifidobacteriales</taxon>
        <taxon>Bifidobacteriaceae</taxon>
        <taxon>Bifidobacterium</taxon>
    </lineage>
</organism>
<gene>
    <name evidence="1" type="primary">ligA</name>
    <name type="ordered locus">BLA_1223</name>
</gene>